<name>IRAD_ECO27</name>
<feature type="chain" id="PRO_1000189477" description="Anti-adapter protein IraD">
    <location>
        <begin position="1"/>
        <end position="127"/>
    </location>
</feature>
<protein>
    <recommendedName>
        <fullName evidence="1">Anti-adapter protein IraD</fullName>
    </recommendedName>
</protein>
<proteinExistence type="inferred from homology"/>
<gene>
    <name evidence="1" type="primary">iraD</name>
    <name type="ordered locus">E2348C_4631</name>
</gene>
<dbReference type="EMBL" id="FM180568">
    <property type="protein sequence ID" value="CAS12179.1"/>
    <property type="molecule type" value="Genomic_DNA"/>
</dbReference>
<dbReference type="RefSeq" id="WP_001374326.1">
    <property type="nucleotide sequence ID" value="NC_011601.1"/>
</dbReference>
<dbReference type="SMR" id="B7UQW3"/>
<dbReference type="KEGG" id="ecg:E2348C_4631"/>
<dbReference type="HOGENOM" id="CLU_1977621_0_0_6"/>
<dbReference type="Proteomes" id="UP000008205">
    <property type="component" value="Chromosome"/>
</dbReference>
<dbReference type="GO" id="GO:0005737">
    <property type="term" value="C:cytoplasm"/>
    <property type="evidence" value="ECO:0007669"/>
    <property type="project" value="UniProtKB-SubCell"/>
</dbReference>
<dbReference type="GO" id="GO:0043856">
    <property type="term" value="F:anti-sigma factor antagonist activity"/>
    <property type="evidence" value="ECO:0007669"/>
    <property type="project" value="InterPro"/>
</dbReference>
<dbReference type="GO" id="GO:0034599">
    <property type="term" value="P:cellular response to oxidative stress"/>
    <property type="evidence" value="ECO:0007669"/>
    <property type="project" value="UniProtKB-UniRule"/>
</dbReference>
<dbReference type="GO" id="GO:0006974">
    <property type="term" value="P:DNA damage response"/>
    <property type="evidence" value="ECO:0007669"/>
    <property type="project" value="InterPro"/>
</dbReference>
<dbReference type="HAMAP" id="MF_02010">
    <property type="entry name" value="IraD"/>
    <property type="match status" value="1"/>
</dbReference>
<dbReference type="InterPro" id="IPR023776">
    <property type="entry name" value="Anti-adapt_IraD"/>
</dbReference>
<dbReference type="InterPro" id="IPR007048">
    <property type="entry name" value="IraD/Gp25-like"/>
</dbReference>
<dbReference type="NCBIfam" id="NF010726">
    <property type="entry name" value="PRK14128.1-1"/>
    <property type="match status" value="1"/>
</dbReference>
<dbReference type="NCBIfam" id="NF010728">
    <property type="entry name" value="PRK14128.1-3"/>
    <property type="match status" value="1"/>
</dbReference>
<dbReference type="Pfam" id="PF04965">
    <property type="entry name" value="GPW_gp25"/>
    <property type="match status" value="1"/>
</dbReference>
<dbReference type="SUPFAM" id="SSF160719">
    <property type="entry name" value="gpW/gp25-like"/>
    <property type="match status" value="1"/>
</dbReference>
<organism>
    <name type="scientific">Escherichia coli O127:H6 (strain E2348/69 / EPEC)</name>
    <dbReference type="NCBI Taxonomy" id="574521"/>
    <lineage>
        <taxon>Bacteria</taxon>
        <taxon>Pseudomonadati</taxon>
        <taxon>Pseudomonadota</taxon>
        <taxon>Gammaproteobacteria</taxon>
        <taxon>Enterobacterales</taxon>
        <taxon>Enterobacteriaceae</taxon>
        <taxon>Escherichia</taxon>
    </lineage>
</organism>
<accession>B7UQW3</accession>
<comment type="function">
    <text evidence="1">Inhibits RpoS proteolysis by regulating RssB activity, thereby increasing the stability of the sigma stress factor RpoS during oxidative stress. Its effect on RpoS stability is due to its interaction with RssB, which probably blocks the interaction of RssB with RpoS, and the consequent delivery of the RssB-RpoS complex to the ClpXP protein degradation pathway.</text>
</comment>
<comment type="subunit">
    <text evidence="1">Interacts with RssB.</text>
</comment>
<comment type="subcellular location">
    <subcellularLocation>
        <location evidence="1">Cytoplasm</location>
    </subcellularLocation>
</comment>
<comment type="similarity">
    <text evidence="1">Belongs to the GpW/Gp25 family. IraD subfamily.</text>
</comment>
<evidence type="ECO:0000255" key="1">
    <source>
        <dbReference type="HAMAP-Rule" id="MF_02010"/>
    </source>
</evidence>
<keyword id="KW-0963">Cytoplasm</keyword>
<keyword id="KW-1185">Reference proteome</keyword>
<keyword id="KW-0346">Stress response</keyword>
<sequence length="127" mass="14750">MMRQSVQTVLPESTGNNTLSLRDSVCRDLFQLFSSPHSPLPILLVSGMPEWQGHNQSDKLLQSWYCRQLRSALLFHEPRIAALQVNLKAVYCHELVISLDMMLYHDDEPLTFDLVWQKGSWHRTMPQ</sequence>
<reference key="1">
    <citation type="journal article" date="2009" name="J. Bacteriol.">
        <title>Complete genome sequence and comparative genome analysis of enteropathogenic Escherichia coli O127:H6 strain E2348/69.</title>
        <authorList>
            <person name="Iguchi A."/>
            <person name="Thomson N.R."/>
            <person name="Ogura Y."/>
            <person name="Saunders D."/>
            <person name="Ooka T."/>
            <person name="Henderson I.R."/>
            <person name="Harris D."/>
            <person name="Asadulghani M."/>
            <person name="Kurokawa K."/>
            <person name="Dean P."/>
            <person name="Kenny B."/>
            <person name="Quail M.A."/>
            <person name="Thurston S."/>
            <person name="Dougan G."/>
            <person name="Hayashi T."/>
            <person name="Parkhill J."/>
            <person name="Frankel G."/>
        </authorList>
    </citation>
    <scope>NUCLEOTIDE SEQUENCE [LARGE SCALE GENOMIC DNA]</scope>
    <source>
        <strain>E2348/69 / EPEC</strain>
    </source>
</reference>